<sequence length="135" mass="15191">MAGSARSAMAAKALQTILNIGLLALATILVIFLVKETFHLAKVLLISSEKDSSYQLIEGIVIYFLYFEFIALIVKYFQSGYHFPLRYFIYIGITAIIRLIIVDHKSPSDTLVYSAAILLLVVTLYLANSNRLKRE</sequence>
<comment type="subcellular location">
    <subcellularLocation>
        <location evidence="1">Cell inner membrane</location>
        <topology evidence="1">Multi-pass membrane protein</topology>
    </subcellularLocation>
</comment>
<comment type="similarity">
    <text evidence="1">Belongs to the PsiE family.</text>
</comment>
<feature type="chain" id="PRO_0000160286" description="Protein PsiE homolog">
    <location>
        <begin position="1"/>
        <end position="135"/>
    </location>
</feature>
<feature type="transmembrane region" description="Helical" evidence="1">
    <location>
        <begin position="14"/>
        <end position="34"/>
    </location>
</feature>
<feature type="transmembrane region" description="Helical" evidence="1">
    <location>
        <begin position="54"/>
        <end position="74"/>
    </location>
</feature>
<feature type="transmembrane region" description="Helical" evidence="1">
    <location>
        <begin position="82"/>
        <end position="102"/>
    </location>
</feature>
<feature type="transmembrane region" description="Helical" evidence="1">
    <location>
        <begin position="107"/>
        <end position="127"/>
    </location>
</feature>
<dbReference type="EMBL" id="BX950851">
    <property type="protein sequence ID" value="CAG76093.1"/>
    <property type="molecule type" value="Genomic_DNA"/>
</dbReference>
<dbReference type="RefSeq" id="WP_005970095.1">
    <property type="nucleotide sequence ID" value="NC_004547.2"/>
</dbReference>
<dbReference type="SMR" id="Q6D2A1"/>
<dbReference type="STRING" id="218491.ECA3195"/>
<dbReference type="GeneID" id="57209880"/>
<dbReference type="KEGG" id="eca:ECA3195"/>
<dbReference type="eggNOG" id="COG3223">
    <property type="taxonomic scope" value="Bacteria"/>
</dbReference>
<dbReference type="HOGENOM" id="CLU_127561_0_0_6"/>
<dbReference type="OrthoDB" id="9792470at2"/>
<dbReference type="Proteomes" id="UP000007966">
    <property type="component" value="Chromosome"/>
</dbReference>
<dbReference type="GO" id="GO:0005886">
    <property type="term" value="C:plasma membrane"/>
    <property type="evidence" value="ECO:0007669"/>
    <property type="project" value="UniProtKB-SubCell"/>
</dbReference>
<dbReference type="GO" id="GO:0016036">
    <property type="term" value="P:cellular response to phosphate starvation"/>
    <property type="evidence" value="ECO:0007669"/>
    <property type="project" value="InterPro"/>
</dbReference>
<dbReference type="HAMAP" id="MF_01048">
    <property type="entry name" value="PsiE"/>
    <property type="match status" value="1"/>
</dbReference>
<dbReference type="InterPro" id="IPR009315">
    <property type="entry name" value="P_starv_induced_PsiE"/>
</dbReference>
<dbReference type="InterPro" id="IPR020948">
    <property type="entry name" value="P_starv_induced_PsiE-like"/>
</dbReference>
<dbReference type="NCBIfam" id="NF002764">
    <property type="entry name" value="PRK02833.1-2"/>
    <property type="match status" value="1"/>
</dbReference>
<dbReference type="NCBIfam" id="NF002765">
    <property type="entry name" value="PRK02833.1-3"/>
    <property type="match status" value="1"/>
</dbReference>
<dbReference type="PANTHER" id="PTHR37819">
    <property type="entry name" value="PROTEIN PSIE"/>
    <property type="match status" value="1"/>
</dbReference>
<dbReference type="PANTHER" id="PTHR37819:SF1">
    <property type="entry name" value="PROTEIN PSIE"/>
    <property type="match status" value="1"/>
</dbReference>
<dbReference type="Pfam" id="PF06146">
    <property type="entry name" value="PsiE"/>
    <property type="match status" value="1"/>
</dbReference>
<dbReference type="PIRSF" id="PIRSF029598">
    <property type="entry name" value="PsiE"/>
    <property type="match status" value="1"/>
</dbReference>
<organism>
    <name type="scientific">Pectobacterium atrosepticum (strain SCRI 1043 / ATCC BAA-672)</name>
    <name type="common">Erwinia carotovora subsp. atroseptica</name>
    <dbReference type="NCBI Taxonomy" id="218491"/>
    <lineage>
        <taxon>Bacteria</taxon>
        <taxon>Pseudomonadati</taxon>
        <taxon>Pseudomonadota</taxon>
        <taxon>Gammaproteobacteria</taxon>
        <taxon>Enterobacterales</taxon>
        <taxon>Pectobacteriaceae</taxon>
        <taxon>Pectobacterium</taxon>
    </lineage>
</organism>
<accession>Q6D2A1</accession>
<gene>
    <name evidence="1" type="primary">psiE</name>
    <name type="ordered locus">ECA3195</name>
</gene>
<name>PSIE_PECAS</name>
<protein>
    <recommendedName>
        <fullName evidence="1">Protein PsiE homolog</fullName>
    </recommendedName>
</protein>
<evidence type="ECO:0000255" key="1">
    <source>
        <dbReference type="HAMAP-Rule" id="MF_01048"/>
    </source>
</evidence>
<proteinExistence type="inferred from homology"/>
<keyword id="KW-0997">Cell inner membrane</keyword>
<keyword id="KW-1003">Cell membrane</keyword>
<keyword id="KW-0472">Membrane</keyword>
<keyword id="KW-1185">Reference proteome</keyword>
<keyword id="KW-0812">Transmembrane</keyword>
<keyword id="KW-1133">Transmembrane helix</keyword>
<reference key="1">
    <citation type="journal article" date="2004" name="Proc. Natl. Acad. Sci. U.S.A.">
        <title>Genome sequence of the enterobacterial phytopathogen Erwinia carotovora subsp. atroseptica and characterization of virulence factors.</title>
        <authorList>
            <person name="Bell K.S."/>
            <person name="Sebaihia M."/>
            <person name="Pritchard L."/>
            <person name="Holden M.T.G."/>
            <person name="Hyman L.J."/>
            <person name="Holeva M.C."/>
            <person name="Thomson N.R."/>
            <person name="Bentley S.D."/>
            <person name="Churcher L.J.C."/>
            <person name="Mungall K."/>
            <person name="Atkin R."/>
            <person name="Bason N."/>
            <person name="Brooks K."/>
            <person name="Chillingworth T."/>
            <person name="Clark K."/>
            <person name="Doggett J."/>
            <person name="Fraser A."/>
            <person name="Hance Z."/>
            <person name="Hauser H."/>
            <person name="Jagels K."/>
            <person name="Moule S."/>
            <person name="Norbertczak H."/>
            <person name="Ormond D."/>
            <person name="Price C."/>
            <person name="Quail M.A."/>
            <person name="Sanders M."/>
            <person name="Walker D."/>
            <person name="Whitehead S."/>
            <person name="Salmond G.P.C."/>
            <person name="Birch P.R.J."/>
            <person name="Parkhill J."/>
            <person name="Toth I.K."/>
        </authorList>
    </citation>
    <scope>NUCLEOTIDE SEQUENCE [LARGE SCALE GENOMIC DNA]</scope>
    <source>
        <strain>SCRI 1043 / ATCC BAA-672</strain>
    </source>
</reference>